<sequence>MYAVVKTGGKQYRVAAGEKLKVEQIPADIGQEITLDQVLSVGEGDQLKVGTPLVAGAVVKATVLAHGRHDKVKIFKMRRRKHYQKHQGHRQNYTEIRIEAITA</sequence>
<dbReference type="EMBL" id="AM902716">
    <property type="protein sequence ID" value="CAP45028.1"/>
    <property type="molecule type" value="Genomic_DNA"/>
</dbReference>
<dbReference type="SMR" id="A9IFF5"/>
<dbReference type="STRING" id="94624.Bpet4677"/>
<dbReference type="KEGG" id="bpt:Bpet4677"/>
<dbReference type="eggNOG" id="COG0261">
    <property type="taxonomic scope" value="Bacteria"/>
</dbReference>
<dbReference type="Proteomes" id="UP000001225">
    <property type="component" value="Chromosome"/>
</dbReference>
<dbReference type="GO" id="GO:0005737">
    <property type="term" value="C:cytoplasm"/>
    <property type="evidence" value="ECO:0007669"/>
    <property type="project" value="UniProtKB-ARBA"/>
</dbReference>
<dbReference type="GO" id="GO:1990904">
    <property type="term" value="C:ribonucleoprotein complex"/>
    <property type="evidence" value="ECO:0007669"/>
    <property type="project" value="UniProtKB-KW"/>
</dbReference>
<dbReference type="GO" id="GO:0005840">
    <property type="term" value="C:ribosome"/>
    <property type="evidence" value="ECO:0007669"/>
    <property type="project" value="UniProtKB-KW"/>
</dbReference>
<dbReference type="GO" id="GO:0019843">
    <property type="term" value="F:rRNA binding"/>
    <property type="evidence" value="ECO:0007669"/>
    <property type="project" value="UniProtKB-UniRule"/>
</dbReference>
<dbReference type="GO" id="GO:0003735">
    <property type="term" value="F:structural constituent of ribosome"/>
    <property type="evidence" value="ECO:0007669"/>
    <property type="project" value="InterPro"/>
</dbReference>
<dbReference type="GO" id="GO:0006412">
    <property type="term" value="P:translation"/>
    <property type="evidence" value="ECO:0007669"/>
    <property type="project" value="UniProtKB-UniRule"/>
</dbReference>
<dbReference type="HAMAP" id="MF_01363">
    <property type="entry name" value="Ribosomal_bL21"/>
    <property type="match status" value="1"/>
</dbReference>
<dbReference type="InterPro" id="IPR028909">
    <property type="entry name" value="bL21-like"/>
</dbReference>
<dbReference type="InterPro" id="IPR036164">
    <property type="entry name" value="bL21-like_sf"/>
</dbReference>
<dbReference type="InterPro" id="IPR001787">
    <property type="entry name" value="Ribosomal_bL21"/>
</dbReference>
<dbReference type="InterPro" id="IPR018258">
    <property type="entry name" value="Ribosomal_bL21_CS"/>
</dbReference>
<dbReference type="NCBIfam" id="TIGR00061">
    <property type="entry name" value="L21"/>
    <property type="match status" value="1"/>
</dbReference>
<dbReference type="PANTHER" id="PTHR21349">
    <property type="entry name" value="50S RIBOSOMAL PROTEIN L21"/>
    <property type="match status" value="1"/>
</dbReference>
<dbReference type="PANTHER" id="PTHR21349:SF0">
    <property type="entry name" value="LARGE RIBOSOMAL SUBUNIT PROTEIN BL21M"/>
    <property type="match status" value="1"/>
</dbReference>
<dbReference type="Pfam" id="PF00829">
    <property type="entry name" value="Ribosomal_L21p"/>
    <property type="match status" value="1"/>
</dbReference>
<dbReference type="SUPFAM" id="SSF141091">
    <property type="entry name" value="L21p-like"/>
    <property type="match status" value="1"/>
</dbReference>
<dbReference type="PROSITE" id="PS01169">
    <property type="entry name" value="RIBOSOMAL_L21"/>
    <property type="match status" value="1"/>
</dbReference>
<protein>
    <recommendedName>
        <fullName evidence="1">Large ribosomal subunit protein bL21</fullName>
    </recommendedName>
    <alternativeName>
        <fullName evidence="2">50S ribosomal protein L21</fullName>
    </alternativeName>
</protein>
<evidence type="ECO:0000255" key="1">
    <source>
        <dbReference type="HAMAP-Rule" id="MF_01363"/>
    </source>
</evidence>
<evidence type="ECO:0000305" key="2"/>
<gene>
    <name evidence="1" type="primary">rplU</name>
    <name type="ordered locus">Bpet4677</name>
</gene>
<feature type="chain" id="PRO_1000143761" description="Large ribosomal subunit protein bL21">
    <location>
        <begin position="1"/>
        <end position="103"/>
    </location>
</feature>
<organism>
    <name type="scientific">Bordetella petrii (strain ATCC BAA-461 / DSM 12804 / CCUG 43448)</name>
    <dbReference type="NCBI Taxonomy" id="340100"/>
    <lineage>
        <taxon>Bacteria</taxon>
        <taxon>Pseudomonadati</taxon>
        <taxon>Pseudomonadota</taxon>
        <taxon>Betaproteobacteria</taxon>
        <taxon>Burkholderiales</taxon>
        <taxon>Alcaligenaceae</taxon>
        <taxon>Bordetella</taxon>
    </lineage>
</organism>
<reference key="1">
    <citation type="journal article" date="2008" name="BMC Genomics">
        <title>The missing link: Bordetella petrii is endowed with both the metabolic versatility of environmental bacteria and virulence traits of pathogenic Bordetellae.</title>
        <authorList>
            <person name="Gross R."/>
            <person name="Guzman C.A."/>
            <person name="Sebaihia M."/>
            <person name="Martin dos Santos V.A.P."/>
            <person name="Pieper D.H."/>
            <person name="Koebnik R."/>
            <person name="Lechner M."/>
            <person name="Bartels D."/>
            <person name="Buhrmester J."/>
            <person name="Choudhuri J.V."/>
            <person name="Ebensen T."/>
            <person name="Gaigalat L."/>
            <person name="Herrmann S."/>
            <person name="Khachane A.N."/>
            <person name="Larisch C."/>
            <person name="Link S."/>
            <person name="Linke B."/>
            <person name="Meyer F."/>
            <person name="Mormann S."/>
            <person name="Nakunst D."/>
            <person name="Rueckert C."/>
            <person name="Schneiker-Bekel S."/>
            <person name="Schulze K."/>
            <person name="Voerholter F.-J."/>
            <person name="Yevsa T."/>
            <person name="Engle J.T."/>
            <person name="Goldman W.E."/>
            <person name="Puehler A."/>
            <person name="Goebel U.B."/>
            <person name="Goesmann A."/>
            <person name="Bloecker H."/>
            <person name="Kaiser O."/>
            <person name="Martinez-Arias R."/>
        </authorList>
    </citation>
    <scope>NUCLEOTIDE SEQUENCE [LARGE SCALE GENOMIC DNA]</scope>
    <source>
        <strain>ATCC BAA-461 / DSM 12804 / CCUG 43448</strain>
    </source>
</reference>
<comment type="function">
    <text evidence="1">This protein binds to 23S rRNA in the presence of protein L20.</text>
</comment>
<comment type="subunit">
    <text evidence="1">Part of the 50S ribosomal subunit. Contacts protein L20.</text>
</comment>
<comment type="similarity">
    <text evidence="1">Belongs to the bacterial ribosomal protein bL21 family.</text>
</comment>
<proteinExistence type="inferred from homology"/>
<keyword id="KW-0687">Ribonucleoprotein</keyword>
<keyword id="KW-0689">Ribosomal protein</keyword>
<keyword id="KW-0694">RNA-binding</keyword>
<keyword id="KW-0699">rRNA-binding</keyword>
<accession>A9IFF5</accession>
<name>RL21_BORPD</name>